<gene>
    <name evidence="1" type="primary">hchA</name>
    <name type="ordered locus">SA0509</name>
</gene>
<comment type="function">
    <text evidence="1">Protein and nucleotide deglycase that catalyzes the deglycation of the Maillard adducts formed between amino groups of proteins or nucleotides and reactive carbonyl groups of glyoxals. Thus, functions as a protein deglycase that repairs methylglyoxal- and glyoxal-glycated proteins, and releases repaired proteins and lactate or glycolate, respectively. Deglycates cysteine, arginine and lysine residues in proteins, and thus reactivates these proteins by reversing glycation by glyoxals. Acts on early glycation intermediates (hemithioacetals and aminocarbinols), preventing the formation of Schiff bases and advanced glycation endproducts (AGE). Also functions as a nucleotide deglycase able to repair glycated guanine in the free nucleotide pool (GTP, GDP, GMP, dGTP) and in DNA and RNA. Is thus involved in a major nucleotide repair system named guanine glycation repair (GG repair), dedicated to reversing methylglyoxal and glyoxal damage via nucleotide sanitization and direct nucleic acid repair. Plays an important role in protecting cells from carbonyl stress.</text>
</comment>
<comment type="catalytic activity">
    <reaction evidence="1">
        <text>N(omega)-(1-hydroxy-2-oxopropyl)-L-arginyl-[protein] + H2O = lactate + L-arginyl-[protein] + H(+)</text>
        <dbReference type="Rhea" id="RHEA:49548"/>
        <dbReference type="Rhea" id="RHEA-COMP:10532"/>
        <dbReference type="Rhea" id="RHEA-COMP:12428"/>
        <dbReference type="ChEBI" id="CHEBI:15377"/>
        <dbReference type="ChEBI" id="CHEBI:15378"/>
        <dbReference type="ChEBI" id="CHEBI:24996"/>
        <dbReference type="ChEBI" id="CHEBI:29965"/>
        <dbReference type="ChEBI" id="CHEBI:131708"/>
        <dbReference type="EC" id="3.5.1.124"/>
    </reaction>
</comment>
<comment type="catalytic activity">
    <reaction evidence="1">
        <text>N(6)-(1-hydroxy-2-oxopropyl)-L-lysyl-[protein] + H2O = lactate + L-lysyl-[protein] + H(+)</text>
        <dbReference type="Rhea" id="RHEA:49552"/>
        <dbReference type="Rhea" id="RHEA-COMP:9752"/>
        <dbReference type="Rhea" id="RHEA-COMP:12429"/>
        <dbReference type="ChEBI" id="CHEBI:15377"/>
        <dbReference type="ChEBI" id="CHEBI:15378"/>
        <dbReference type="ChEBI" id="CHEBI:24996"/>
        <dbReference type="ChEBI" id="CHEBI:29969"/>
        <dbReference type="ChEBI" id="CHEBI:131709"/>
        <dbReference type="EC" id="3.5.1.124"/>
    </reaction>
</comment>
<comment type="catalytic activity">
    <reaction evidence="1">
        <text>S-(1-hydroxy-2-oxopropyl)-L-cysteinyl-[protein] + H2O = lactate + L-cysteinyl-[protein] + H(+)</text>
        <dbReference type="Rhea" id="RHEA:49556"/>
        <dbReference type="Rhea" id="RHEA-COMP:10131"/>
        <dbReference type="Rhea" id="RHEA-COMP:12430"/>
        <dbReference type="ChEBI" id="CHEBI:15377"/>
        <dbReference type="ChEBI" id="CHEBI:15378"/>
        <dbReference type="ChEBI" id="CHEBI:24996"/>
        <dbReference type="ChEBI" id="CHEBI:29950"/>
        <dbReference type="ChEBI" id="CHEBI:131710"/>
        <dbReference type="EC" id="3.5.1.124"/>
    </reaction>
</comment>
<comment type="catalytic activity">
    <reaction evidence="1">
        <text>N(omega)-(1-hydroxy-2-oxoethyl)-L-arginyl-[protein] + H2O = L-arginyl-[protein] + glycolate + H(+)</text>
        <dbReference type="Rhea" id="RHEA:57188"/>
        <dbReference type="Rhea" id="RHEA-COMP:10532"/>
        <dbReference type="Rhea" id="RHEA-COMP:14844"/>
        <dbReference type="ChEBI" id="CHEBI:15377"/>
        <dbReference type="ChEBI" id="CHEBI:15378"/>
        <dbReference type="ChEBI" id="CHEBI:29805"/>
        <dbReference type="ChEBI" id="CHEBI:29965"/>
        <dbReference type="ChEBI" id="CHEBI:141553"/>
        <dbReference type="EC" id="3.5.1.124"/>
    </reaction>
</comment>
<comment type="catalytic activity">
    <reaction evidence="1">
        <text>N(6)-(1-hydroxy-2-oxoethyl)-L-lysyl-[protein] + H2O = glycolate + L-lysyl-[protein] + H(+)</text>
        <dbReference type="Rhea" id="RHEA:57192"/>
        <dbReference type="Rhea" id="RHEA-COMP:9752"/>
        <dbReference type="Rhea" id="RHEA-COMP:14845"/>
        <dbReference type="ChEBI" id="CHEBI:15377"/>
        <dbReference type="ChEBI" id="CHEBI:15378"/>
        <dbReference type="ChEBI" id="CHEBI:29805"/>
        <dbReference type="ChEBI" id="CHEBI:29969"/>
        <dbReference type="ChEBI" id="CHEBI:141554"/>
        <dbReference type="EC" id="3.5.1.124"/>
    </reaction>
</comment>
<comment type="catalytic activity">
    <reaction evidence="1">
        <text>S-(1-hydroxy-2-oxoethyl)-L-cysteinyl-[protein] + H2O = glycolate + L-cysteinyl-[protein] + H(+)</text>
        <dbReference type="Rhea" id="RHEA:57196"/>
        <dbReference type="Rhea" id="RHEA-COMP:10131"/>
        <dbReference type="Rhea" id="RHEA-COMP:14846"/>
        <dbReference type="ChEBI" id="CHEBI:15377"/>
        <dbReference type="ChEBI" id="CHEBI:15378"/>
        <dbReference type="ChEBI" id="CHEBI:29805"/>
        <dbReference type="ChEBI" id="CHEBI:29950"/>
        <dbReference type="ChEBI" id="CHEBI:141555"/>
        <dbReference type="EC" id="3.5.1.124"/>
    </reaction>
</comment>
<comment type="catalytic activity">
    <reaction evidence="1">
        <text>N(2)-(1-hydroxy-2-oxopropyl)-dGTP + H2O = lactate + dGTP + H(+)</text>
        <dbReference type="Rhea" id="RHEA:57244"/>
        <dbReference type="ChEBI" id="CHEBI:15377"/>
        <dbReference type="ChEBI" id="CHEBI:15378"/>
        <dbReference type="ChEBI" id="CHEBI:24996"/>
        <dbReference type="ChEBI" id="CHEBI:61429"/>
        <dbReference type="ChEBI" id="CHEBI:141569"/>
    </reaction>
</comment>
<comment type="catalytic activity">
    <reaction evidence="1">
        <text>N(2)-(1-hydroxy-2-oxopropyl)-GTP + H2O = lactate + GTP + H(+)</text>
        <dbReference type="Rhea" id="RHEA:57256"/>
        <dbReference type="ChEBI" id="CHEBI:15377"/>
        <dbReference type="ChEBI" id="CHEBI:15378"/>
        <dbReference type="ChEBI" id="CHEBI:24996"/>
        <dbReference type="ChEBI" id="CHEBI:37565"/>
        <dbReference type="ChEBI" id="CHEBI:141570"/>
    </reaction>
</comment>
<comment type="catalytic activity">
    <reaction evidence="1">
        <text>N(2)-(1-hydroxy-2-oxopropyl)-GDP + H2O = lactate + GDP + H(+)</text>
        <dbReference type="Rhea" id="RHEA:57260"/>
        <dbReference type="ChEBI" id="CHEBI:15377"/>
        <dbReference type="ChEBI" id="CHEBI:15378"/>
        <dbReference type="ChEBI" id="CHEBI:24996"/>
        <dbReference type="ChEBI" id="CHEBI:58189"/>
        <dbReference type="ChEBI" id="CHEBI:141573"/>
    </reaction>
</comment>
<comment type="catalytic activity">
    <reaction evidence="1">
        <text>N(2)-(1-hydroxy-2-oxopropyl)-GMP + H2O = lactate + GMP + H(+)</text>
        <dbReference type="Rhea" id="RHEA:57268"/>
        <dbReference type="ChEBI" id="CHEBI:15377"/>
        <dbReference type="ChEBI" id="CHEBI:15378"/>
        <dbReference type="ChEBI" id="CHEBI:24996"/>
        <dbReference type="ChEBI" id="CHEBI:58115"/>
        <dbReference type="ChEBI" id="CHEBI:141575"/>
    </reaction>
</comment>
<comment type="catalytic activity">
    <reaction evidence="1">
        <text>N(2)-(1-hydroxy-2-oxoethyl)-dGTP + H2O = dGTP + glycolate + H(+)</text>
        <dbReference type="Rhea" id="RHEA:57248"/>
        <dbReference type="ChEBI" id="CHEBI:15377"/>
        <dbReference type="ChEBI" id="CHEBI:15378"/>
        <dbReference type="ChEBI" id="CHEBI:29805"/>
        <dbReference type="ChEBI" id="CHEBI:61429"/>
        <dbReference type="ChEBI" id="CHEBI:141572"/>
    </reaction>
</comment>
<comment type="catalytic activity">
    <reaction evidence="1">
        <text>N(2)-(1-hydroxy-2-oxoethyl)-GTP + H2O = glycolate + GTP + H(+)</text>
        <dbReference type="Rhea" id="RHEA:57252"/>
        <dbReference type="ChEBI" id="CHEBI:15377"/>
        <dbReference type="ChEBI" id="CHEBI:15378"/>
        <dbReference type="ChEBI" id="CHEBI:29805"/>
        <dbReference type="ChEBI" id="CHEBI:37565"/>
        <dbReference type="ChEBI" id="CHEBI:141571"/>
    </reaction>
</comment>
<comment type="catalytic activity">
    <reaction evidence="1">
        <text>N(2)-(1-hydroxy-2-oxoethyl)-GDP + H2O = glycolate + GDP + H(+)</text>
        <dbReference type="Rhea" id="RHEA:57264"/>
        <dbReference type="ChEBI" id="CHEBI:15377"/>
        <dbReference type="ChEBI" id="CHEBI:15378"/>
        <dbReference type="ChEBI" id="CHEBI:29805"/>
        <dbReference type="ChEBI" id="CHEBI:58189"/>
        <dbReference type="ChEBI" id="CHEBI:141574"/>
    </reaction>
</comment>
<comment type="catalytic activity">
    <reaction evidence="1">
        <text>N(2)-(1-hydroxy-2-oxoethyl)-GMP + H2O = glycolate + GMP + H(+)</text>
        <dbReference type="Rhea" id="RHEA:57304"/>
        <dbReference type="ChEBI" id="CHEBI:15377"/>
        <dbReference type="ChEBI" id="CHEBI:15378"/>
        <dbReference type="ChEBI" id="CHEBI:29805"/>
        <dbReference type="ChEBI" id="CHEBI:58115"/>
        <dbReference type="ChEBI" id="CHEBI:141576"/>
    </reaction>
</comment>
<comment type="catalytic activity">
    <reaction evidence="1">
        <text>an N(2)-(1-hydroxy-2-oxopropyl)-guanosine in RNA + H2O = a guanosine in RNA + lactate + H(+)</text>
        <dbReference type="Rhea" id="RHEA:57288"/>
        <dbReference type="Rhea" id="RHEA-COMP:14855"/>
        <dbReference type="Rhea" id="RHEA-COMP:14858"/>
        <dbReference type="ChEBI" id="CHEBI:15377"/>
        <dbReference type="ChEBI" id="CHEBI:15378"/>
        <dbReference type="ChEBI" id="CHEBI:24996"/>
        <dbReference type="ChEBI" id="CHEBI:74269"/>
        <dbReference type="ChEBI" id="CHEBI:141580"/>
    </reaction>
</comment>
<comment type="catalytic activity">
    <reaction evidence="1">
        <text>an N(2)-(1-hydroxy-2-oxopropyl)-2'-deoxyguanosine in DNA + H2O = a 2'-deoxyguanosine in DNA + lactate + H(+)</text>
        <dbReference type="Rhea" id="RHEA:57300"/>
        <dbReference type="Rhea" id="RHEA-COMP:11367"/>
        <dbReference type="Rhea" id="RHEA-COMP:14856"/>
        <dbReference type="ChEBI" id="CHEBI:15377"/>
        <dbReference type="ChEBI" id="CHEBI:15378"/>
        <dbReference type="ChEBI" id="CHEBI:24996"/>
        <dbReference type="ChEBI" id="CHEBI:85445"/>
        <dbReference type="ChEBI" id="CHEBI:141578"/>
    </reaction>
</comment>
<comment type="catalytic activity">
    <reaction evidence="1">
        <text>an N(2)-(1-hydroxy-2-oxoethyl)-guanosine in RNA + H2O = a guanosine in RNA + glycolate + H(+)</text>
        <dbReference type="Rhea" id="RHEA:57292"/>
        <dbReference type="Rhea" id="RHEA-COMP:14855"/>
        <dbReference type="Rhea" id="RHEA-COMP:14859"/>
        <dbReference type="ChEBI" id="CHEBI:15377"/>
        <dbReference type="ChEBI" id="CHEBI:15378"/>
        <dbReference type="ChEBI" id="CHEBI:29805"/>
        <dbReference type="ChEBI" id="CHEBI:74269"/>
        <dbReference type="ChEBI" id="CHEBI:141581"/>
    </reaction>
</comment>
<comment type="catalytic activity">
    <reaction evidence="1">
        <text>an N(2)-(1-hydroxy-2-oxoethyl)-2'-deoxyguanosine in DNA + H2O = a 2'-deoxyguanosine in DNA + glycolate + H(+)</text>
        <dbReference type="Rhea" id="RHEA:57296"/>
        <dbReference type="Rhea" id="RHEA-COMP:11367"/>
        <dbReference type="Rhea" id="RHEA-COMP:14857"/>
        <dbReference type="ChEBI" id="CHEBI:15377"/>
        <dbReference type="ChEBI" id="CHEBI:15378"/>
        <dbReference type="ChEBI" id="CHEBI:29805"/>
        <dbReference type="ChEBI" id="CHEBI:85445"/>
        <dbReference type="ChEBI" id="CHEBI:141579"/>
    </reaction>
</comment>
<comment type="subcellular location">
    <subcellularLocation>
        <location evidence="1">Cytoplasm</location>
    </subcellularLocation>
</comment>
<comment type="similarity">
    <text evidence="1">Belongs to the peptidase C56 family. HchA subfamily.</text>
</comment>
<sequence length="292" mass="32177">MSQDVNELSKQPTPDKAEDNAFFPSPYSLSQYTAPKTDFDGVEHKGAYKDGKWKVLMIAAEERYVLLENGKMFSTGNHPVEMLLPLHHLMEAGFDVDVATLSGYPVKLELWAMPTEDEAVISTYNKLKEKLKQPKKLADVIKNELGPDSDYLSVFIPGGHAAVVGISESEDVQQTLDWALDNDRFIVTLCHGPAALLSAGLNREKSPLEGYSVCVFPDSLDEGANIEIGYLPGRLKWLVADLLTKQGLKVVNDDMTGRTLKDRKLLTGDSPLASNELGKLAVNEMLNAIQNK</sequence>
<feature type="chain" id="PRO_0000209422" description="Protein/nucleic acid deglycase HchA">
    <location>
        <begin position="1"/>
        <end position="292"/>
    </location>
</feature>
<feature type="region of interest" description="Disordered" evidence="2">
    <location>
        <begin position="1"/>
        <end position="23"/>
    </location>
</feature>
<feature type="compositionally biased region" description="Polar residues" evidence="2">
    <location>
        <begin position="1"/>
        <end position="12"/>
    </location>
</feature>
<feature type="active site" description="Nucleophile" evidence="1">
    <location>
        <position position="190"/>
    </location>
</feature>
<evidence type="ECO:0000255" key="1">
    <source>
        <dbReference type="HAMAP-Rule" id="MF_01046"/>
    </source>
</evidence>
<evidence type="ECO:0000256" key="2">
    <source>
        <dbReference type="SAM" id="MobiDB-lite"/>
    </source>
</evidence>
<keyword id="KW-0963">Cytoplasm</keyword>
<keyword id="KW-0227">DNA damage</keyword>
<keyword id="KW-0234">DNA repair</keyword>
<keyword id="KW-0378">Hydrolase</keyword>
<keyword id="KW-0346">Stress response</keyword>
<name>HCHA_STAAN</name>
<protein>
    <recommendedName>
        <fullName evidence="1">Protein/nucleic acid deglycase HchA</fullName>
        <ecNumber evidence="1">3.1.2.-</ecNumber>
        <ecNumber evidence="1">3.5.1.-</ecNumber>
        <ecNumber evidence="1">3.5.1.124</ecNumber>
    </recommendedName>
    <alternativeName>
        <fullName evidence="1">Maillard deglycase</fullName>
    </alternativeName>
</protein>
<proteinExistence type="evidence at protein level"/>
<dbReference type="EC" id="3.1.2.-" evidence="1"/>
<dbReference type="EC" id="3.5.1.-" evidence="1"/>
<dbReference type="EC" id="3.5.1.124" evidence="1"/>
<dbReference type="EMBL" id="BA000018">
    <property type="protein sequence ID" value="BAB41740.1"/>
    <property type="molecule type" value="Genomic_DNA"/>
</dbReference>
<dbReference type="PIR" id="A89823">
    <property type="entry name" value="A89823"/>
</dbReference>
<dbReference type="RefSeq" id="WP_000076404.1">
    <property type="nucleotide sequence ID" value="NC_002745.2"/>
</dbReference>
<dbReference type="SMR" id="P64313"/>
<dbReference type="MEROPS" id="C56.006"/>
<dbReference type="EnsemblBacteria" id="BAB41740">
    <property type="protein sequence ID" value="BAB41740"/>
    <property type="gene ID" value="BAB41740"/>
</dbReference>
<dbReference type="KEGG" id="sau:SA0509"/>
<dbReference type="HOGENOM" id="CLU_066933_0_0_9"/>
<dbReference type="GO" id="GO:0005737">
    <property type="term" value="C:cytoplasm"/>
    <property type="evidence" value="ECO:0007669"/>
    <property type="project" value="UniProtKB-SubCell"/>
</dbReference>
<dbReference type="GO" id="GO:0019172">
    <property type="term" value="F:glyoxalase III activity"/>
    <property type="evidence" value="ECO:0007669"/>
    <property type="project" value="TreeGrafter"/>
</dbReference>
<dbReference type="GO" id="GO:0036524">
    <property type="term" value="F:protein deglycase activity"/>
    <property type="evidence" value="ECO:0007669"/>
    <property type="project" value="UniProtKB-UniRule"/>
</dbReference>
<dbReference type="GO" id="GO:0016790">
    <property type="term" value="F:thiolester hydrolase activity"/>
    <property type="evidence" value="ECO:0007669"/>
    <property type="project" value="UniProtKB-UniRule"/>
</dbReference>
<dbReference type="GO" id="GO:0006281">
    <property type="term" value="P:DNA repair"/>
    <property type="evidence" value="ECO:0007669"/>
    <property type="project" value="UniProtKB-UniRule"/>
</dbReference>
<dbReference type="GO" id="GO:0019243">
    <property type="term" value="P:methylglyoxal catabolic process to D-lactate via S-lactoyl-glutathione"/>
    <property type="evidence" value="ECO:0007669"/>
    <property type="project" value="TreeGrafter"/>
</dbReference>
<dbReference type="GO" id="GO:0030091">
    <property type="term" value="P:protein repair"/>
    <property type="evidence" value="ECO:0007669"/>
    <property type="project" value="UniProtKB-UniRule"/>
</dbReference>
<dbReference type="CDD" id="cd03148">
    <property type="entry name" value="GATase1_EcHsp31_like"/>
    <property type="match status" value="1"/>
</dbReference>
<dbReference type="Gene3D" id="3.40.50.880">
    <property type="match status" value="1"/>
</dbReference>
<dbReference type="HAMAP" id="MF_01046">
    <property type="entry name" value="Deglycase_HchA"/>
    <property type="match status" value="1"/>
</dbReference>
<dbReference type="InterPro" id="IPR029062">
    <property type="entry name" value="Class_I_gatase-like"/>
</dbReference>
<dbReference type="InterPro" id="IPR002818">
    <property type="entry name" value="DJ-1/PfpI"/>
</dbReference>
<dbReference type="InterPro" id="IPR017283">
    <property type="entry name" value="HchA"/>
</dbReference>
<dbReference type="InterPro" id="IPR050325">
    <property type="entry name" value="Prot/Nucl_acid_deglycase"/>
</dbReference>
<dbReference type="NCBIfam" id="NF003168">
    <property type="entry name" value="PRK04155.1"/>
    <property type="match status" value="1"/>
</dbReference>
<dbReference type="PANTHER" id="PTHR48094">
    <property type="entry name" value="PROTEIN/NUCLEIC ACID DEGLYCASE DJ-1-RELATED"/>
    <property type="match status" value="1"/>
</dbReference>
<dbReference type="PANTHER" id="PTHR48094:SF20">
    <property type="entry name" value="PROTEIN_NUCLEIC ACID DEGLYCASE 1"/>
    <property type="match status" value="1"/>
</dbReference>
<dbReference type="Pfam" id="PF01965">
    <property type="entry name" value="DJ-1_PfpI"/>
    <property type="match status" value="1"/>
</dbReference>
<dbReference type="PIRSF" id="PIRSF037798">
    <property type="entry name" value="Chaperone_HchA"/>
    <property type="match status" value="1"/>
</dbReference>
<dbReference type="SUPFAM" id="SSF52317">
    <property type="entry name" value="Class I glutamine amidotransferase-like"/>
    <property type="match status" value="1"/>
</dbReference>
<accession>P64313</accession>
<accession>Q99W58</accession>
<organism>
    <name type="scientific">Staphylococcus aureus (strain N315)</name>
    <dbReference type="NCBI Taxonomy" id="158879"/>
    <lineage>
        <taxon>Bacteria</taxon>
        <taxon>Bacillati</taxon>
        <taxon>Bacillota</taxon>
        <taxon>Bacilli</taxon>
        <taxon>Bacillales</taxon>
        <taxon>Staphylococcaceae</taxon>
        <taxon>Staphylococcus</taxon>
    </lineage>
</organism>
<reference key="1">
    <citation type="journal article" date="2001" name="Lancet">
        <title>Whole genome sequencing of meticillin-resistant Staphylococcus aureus.</title>
        <authorList>
            <person name="Kuroda M."/>
            <person name="Ohta T."/>
            <person name="Uchiyama I."/>
            <person name="Baba T."/>
            <person name="Yuzawa H."/>
            <person name="Kobayashi I."/>
            <person name="Cui L."/>
            <person name="Oguchi A."/>
            <person name="Aoki K."/>
            <person name="Nagai Y."/>
            <person name="Lian J.-Q."/>
            <person name="Ito T."/>
            <person name="Kanamori M."/>
            <person name="Matsumaru H."/>
            <person name="Maruyama A."/>
            <person name="Murakami H."/>
            <person name="Hosoyama A."/>
            <person name="Mizutani-Ui Y."/>
            <person name="Takahashi N.K."/>
            <person name="Sawano T."/>
            <person name="Inoue R."/>
            <person name="Kaito C."/>
            <person name="Sekimizu K."/>
            <person name="Hirakawa H."/>
            <person name="Kuhara S."/>
            <person name="Goto S."/>
            <person name="Yabuzaki J."/>
            <person name="Kanehisa M."/>
            <person name="Yamashita A."/>
            <person name="Oshima K."/>
            <person name="Furuya K."/>
            <person name="Yoshino C."/>
            <person name="Shiba T."/>
            <person name="Hattori M."/>
            <person name="Ogasawara N."/>
            <person name="Hayashi H."/>
            <person name="Hiramatsu K."/>
        </authorList>
    </citation>
    <scope>NUCLEOTIDE SEQUENCE [LARGE SCALE GENOMIC DNA]</scope>
    <source>
        <strain>N315</strain>
    </source>
</reference>
<reference key="2">
    <citation type="submission" date="2007-10" db="UniProtKB">
        <title>Shotgun proteomic analysis of total and membrane protein extracts of S. aureus strain N315.</title>
        <authorList>
            <person name="Vaezzadeh A.R."/>
            <person name="Deshusses J."/>
            <person name="Lescuyer P."/>
            <person name="Hochstrasser D.F."/>
        </authorList>
    </citation>
    <scope>IDENTIFICATION BY MASS SPECTROMETRY [LARGE SCALE ANALYSIS]</scope>
    <source>
        <strain>N315</strain>
    </source>
</reference>